<proteinExistence type="inferred from homology"/>
<protein>
    <recommendedName>
        <fullName>NADP-specific glutamate dehydrogenase</fullName>
        <shortName>NADP-GDH</shortName>
        <ecNumber>1.4.1.4</ecNumber>
    </recommendedName>
</protein>
<gene>
    <name type="primary">gdhA</name>
    <name type="ordered locus">STM1299</name>
</gene>
<sequence>MDQTCSLESFLNHVQKRDPHQTEFAQAVREVMTTLWPFLEQNPRYRHMSLLERLVEPERVIQFRVVWLDDKNQVQVNRAWRVQFNSAIGPYKGGMRFHPSVNLSILKFLGFEQTFKNALTTLPMGGGKGGSDFDPKGKSEGEVMRFCQALMTELYRHLGPDTDVPAGDIGVGGREVGFMAGMMRKLSNNSSCVFTGKGLSFGGSLIRPEATGYGLVYFTEAMLKRHGLGFEGMRVAVSGSGNVAQYAIEKAMAFGARVVTASDSSGTVVDESGFTPEKLARLCEIKASRDGRVADYAREFGLTYLEGQQPWSVPVDIALPCATQNELDVDAARVLIANGVKAVAEGANMPTTIEATDLFLEAGVLFAPGKAANAGGVATSGLEMAQNAARLSWKAEKVDARLHHIMLDIHHACVEYGGDNKHTNYVQGANIAGFVKVADAMLAQGVI</sequence>
<reference key="1">
    <citation type="journal article" date="1989" name="J. Biol. Chem.">
        <title>Affinity labeling of a glutamyl peptide in the coenzyme binding site of NADP+-specific glutamate dehydrogenase of Salmonella typhimurium by 2-[(4-bromo-2,3-dioxobutyl)thio]-1,N6-ethenoadenosine 2',5'-bisphosphate.</title>
        <authorList>
            <person name="Bansal A."/>
            <person name="Dayton M.A."/>
            <person name="Zalkin H."/>
            <person name="Colman R.F."/>
        </authorList>
    </citation>
    <scope>NUCLEOTIDE SEQUENCE [GENOMIC DNA]</scope>
</reference>
<reference key="2">
    <citation type="journal article" date="2001" name="Nature">
        <title>Complete genome sequence of Salmonella enterica serovar Typhimurium LT2.</title>
        <authorList>
            <person name="McClelland M."/>
            <person name="Sanderson K.E."/>
            <person name="Spieth J."/>
            <person name="Clifton S.W."/>
            <person name="Latreille P."/>
            <person name="Courtney L."/>
            <person name="Porwollik S."/>
            <person name="Ali J."/>
            <person name="Dante M."/>
            <person name="Du F."/>
            <person name="Hou S."/>
            <person name="Layman D."/>
            <person name="Leonard S."/>
            <person name="Nguyen C."/>
            <person name="Scott K."/>
            <person name="Holmes A."/>
            <person name="Grewal N."/>
            <person name="Mulvaney E."/>
            <person name="Ryan E."/>
            <person name="Sun H."/>
            <person name="Florea L."/>
            <person name="Miller W."/>
            <person name="Stoneking T."/>
            <person name="Nhan M."/>
            <person name="Waterston R."/>
            <person name="Wilson R.K."/>
        </authorList>
    </citation>
    <scope>NUCLEOTIDE SEQUENCE [LARGE SCALE GENOMIC DNA]</scope>
    <source>
        <strain>LT2 / SGSC1412 / ATCC 700720</strain>
    </source>
</reference>
<evidence type="ECO:0000250" key="1"/>
<evidence type="ECO:0000255" key="2">
    <source>
        <dbReference type="PROSITE-ProRule" id="PRU10011"/>
    </source>
</evidence>
<evidence type="ECO:0000305" key="3"/>
<accession>P15111</accession>
<comment type="function">
    <text evidence="1">Catalyzes the reversible oxidative deamination of glutamate to alpha-ketoglutarate and ammonia.</text>
</comment>
<comment type="catalytic activity">
    <reaction>
        <text>L-glutamate + NADP(+) + H2O = 2-oxoglutarate + NH4(+) + NADPH + H(+)</text>
        <dbReference type="Rhea" id="RHEA:11612"/>
        <dbReference type="ChEBI" id="CHEBI:15377"/>
        <dbReference type="ChEBI" id="CHEBI:15378"/>
        <dbReference type="ChEBI" id="CHEBI:16810"/>
        <dbReference type="ChEBI" id="CHEBI:28938"/>
        <dbReference type="ChEBI" id="CHEBI:29985"/>
        <dbReference type="ChEBI" id="CHEBI:57783"/>
        <dbReference type="ChEBI" id="CHEBI:58349"/>
        <dbReference type="EC" id="1.4.1.4"/>
    </reaction>
</comment>
<comment type="subunit">
    <text evidence="1">Homohexamer.</text>
</comment>
<comment type="similarity">
    <text evidence="3">Belongs to the Glu/Leu/Phe/Val dehydrogenases family.</text>
</comment>
<feature type="chain" id="PRO_0000182776" description="NADP-specific glutamate dehydrogenase">
    <location>
        <begin position="1"/>
        <end position="447"/>
    </location>
</feature>
<feature type="active site" description="Proton donor" evidence="2">
    <location>
        <position position="128"/>
    </location>
</feature>
<feature type="binding site" evidence="1">
    <location>
        <position position="92"/>
    </location>
    <ligand>
        <name>substrate</name>
    </ligand>
</feature>
<feature type="binding site" evidence="1">
    <location>
        <position position="113"/>
    </location>
    <ligand>
        <name>substrate</name>
    </ligand>
</feature>
<feature type="binding site" evidence="1">
    <location>
        <position position="116"/>
    </location>
    <ligand>
        <name>substrate</name>
    </ligand>
</feature>
<feature type="binding site" evidence="1">
    <location>
        <position position="167"/>
    </location>
    <ligand>
        <name>substrate</name>
    </ligand>
</feature>
<feature type="binding site" evidence="1">
    <location>
        <position position="211"/>
    </location>
    <ligand>
        <name>NADP(+)</name>
        <dbReference type="ChEBI" id="CHEBI:58349"/>
    </ligand>
</feature>
<feature type="binding site" evidence="1">
    <location>
        <position position="242"/>
    </location>
    <ligand>
        <name>NADP(+)</name>
        <dbReference type="ChEBI" id="CHEBI:58349"/>
    </ligand>
</feature>
<feature type="binding site" evidence="1">
    <location>
        <position position="380"/>
    </location>
    <ligand>
        <name>substrate</name>
    </ligand>
</feature>
<feature type="site" description="Important for catalysis" evidence="1">
    <location>
        <position position="168"/>
    </location>
</feature>
<feature type="sequence conflict" description="In Ref. 1; AAA27131." evidence="3" ref="1">
    <original>E</original>
    <variation>D</variation>
    <location>
        <position position="299"/>
    </location>
</feature>
<keyword id="KW-0521">NADP</keyword>
<keyword id="KW-0560">Oxidoreductase</keyword>
<keyword id="KW-1185">Reference proteome</keyword>
<name>DHE4_SALTY</name>
<dbReference type="EC" id="1.4.1.4"/>
<dbReference type="EMBL" id="M24021">
    <property type="protein sequence ID" value="AAA27131.1"/>
    <property type="molecule type" value="Genomic_DNA"/>
</dbReference>
<dbReference type="EMBL" id="AE006468">
    <property type="protein sequence ID" value="AAL20224.1"/>
    <property type="molecule type" value="Genomic_DNA"/>
</dbReference>
<dbReference type="PIR" id="A33504">
    <property type="entry name" value="A33504"/>
</dbReference>
<dbReference type="RefSeq" id="NP_460265.1">
    <property type="nucleotide sequence ID" value="NC_003197.2"/>
</dbReference>
<dbReference type="RefSeq" id="WP_000372869.1">
    <property type="nucleotide sequence ID" value="NC_003197.2"/>
</dbReference>
<dbReference type="SMR" id="P15111"/>
<dbReference type="STRING" id="99287.STM1299"/>
<dbReference type="PaxDb" id="99287-STM1299"/>
<dbReference type="GeneID" id="1252817"/>
<dbReference type="KEGG" id="stm:STM1299"/>
<dbReference type="PATRIC" id="fig|99287.12.peg.1380"/>
<dbReference type="HOGENOM" id="CLU_025763_2_1_6"/>
<dbReference type="OMA" id="PCFAAFP"/>
<dbReference type="PhylomeDB" id="P15111"/>
<dbReference type="BioCyc" id="SENT99287:STM1299-MONOMER"/>
<dbReference type="SABIO-RK" id="P15111"/>
<dbReference type="Proteomes" id="UP000001014">
    <property type="component" value="Chromosome"/>
</dbReference>
<dbReference type="GO" id="GO:0005737">
    <property type="term" value="C:cytoplasm"/>
    <property type="evidence" value="ECO:0000250"/>
    <property type="project" value="UniProtKB"/>
</dbReference>
<dbReference type="GO" id="GO:0005829">
    <property type="term" value="C:cytosol"/>
    <property type="evidence" value="ECO:0000318"/>
    <property type="project" value="GO_Central"/>
</dbReference>
<dbReference type="GO" id="GO:0004354">
    <property type="term" value="F:glutamate dehydrogenase (NADP+) activity"/>
    <property type="evidence" value="ECO:0000250"/>
    <property type="project" value="UniProtKB"/>
</dbReference>
<dbReference type="GO" id="GO:0006537">
    <property type="term" value="P:glutamate biosynthetic process"/>
    <property type="evidence" value="ECO:0000250"/>
    <property type="project" value="UniProtKB"/>
</dbReference>
<dbReference type="CDD" id="cd05313">
    <property type="entry name" value="NAD_bind_2_Glu_DH"/>
    <property type="match status" value="1"/>
</dbReference>
<dbReference type="FunFam" id="1.10.285.10:FF:000001">
    <property type="entry name" value="Glutamate dehydrogenase"/>
    <property type="match status" value="1"/>
</dbReference>
<dbReference type="FunFam" id="1.10.285.10:FF:000002">
    <property type="entry name" value="Glutamate dehydrogenase"/>
    <property type="match status" value="1"/>
</dbReference>
<dbReference type="FunFam" id="3.40.50.10860:FF:000002">
    <property type="entry name" value="Glutamate dehydrogenase"/>
    <property type="match status" value="1"/>
</dbReference>
<dbReference type="FunFam" id="3.40.50.720:FF:000030">
    <property type="entry name" value="Glutamate dehydrogenase"/>
    <property type="match status" value="1"/>
</dbReference>
<dbReference type="Gene3D" id="1.10.285.10">
    <property type="entry name" value="Glutamate Dehydrogenase, chain A, domain 3"/>
    <property type="match status" value="2"/>
</dbReference>
<dbReference type="Gene3D" id="3.40.50.10860">
    <property type="entry name" value="Leucine Dehydrogenase, chain A, domain 1"/>
    <property type="match status" value="1"/>
</dbReference>
<dbReference type="Gene3D" id="3.40.50.720">
    <property type="entry name" value="NAD(P)-binding Rossmann-like Domain"/>
    <property type="match status" value="1"/>
</dbReference>
<dbReference type="InterPro" id="IPR046346">
    <property type="entry name" value="Aminoacid_DH-like_N_sf"/>
</dbReference>
<dbReference type="InterPro" id="IPR006095">
    <property type="entry name" value="Glu/Leu/Phe/Val/Trp_DH"/>
</dbReference>
<dbReference type="InterPro" id="IPR006096">
    <property type="entry name" value="Glu/Leu/Phe/Val/Trp_DH_C"/>
</dbReference>
<dbReference type="InterPro" id="IPR006097">
    <property type="entry name" value="Glu/Leu/Phe/Val/Trp_DH_dimer"/>
</dbReference>
<dbReference type="InterPro" id="IPR033524">
    <property type="entry name" value="Glu/Leu/Phe/Val_DH_AS"/>
</dbReference>
<dbReference type="InterPro" id="IPR014362">
    <property type="entry name" value="Glu_DH"/>
</dbReference>
<dbReference type="InterPro" id="IPR050724">
    <property type="entry name" value="Glu_Leu_Phe_Val_DH"/>
</dbReference>
<dbReference type="InterPro" id="IPR036291">
    <property type="entry name" value="NAD(P)-bd_dom_sf"/>
</dbReference>
<dbReference type="InterPro" id="IPR033922">
    <property type="entry name" value="NAD_bind_Glu_DH"/>
</dbReference>
<dbReference type="NCBIfam" id="NF006929">
    <property type="entry name" value="PRK09414.1"/>
    <property type="match status" value="1"/>
</dbReference>
<dbReference type="PANTHER" id="PTHR43571">
    <property type="entry name" value="NADP-SPECIFIC GLUTAMATE DEHYDROGENASE 1-RELATED"/>
    <property type="match status" value="1"/>
</dbReference>
<dbReference type="PANTHER" id="PTHR43571:SF1">
    <property type="entry name" value="NADP-SPECIFIC GLUTAMATE DEHYDROGENASE 1-RELATED"/>
    <property type="match status" value="1"/>
</dbReference>
<dbReference type="Pfam" id="PF00208">
    <property type="entry name" value="ELFV_dehydrog"/>
    <property type="match status" value="1"/>
</dbReference>
<dbReference type="Pfam" id="PF02812">
    <property type="entry name" value="ELFV_dehydrog_N"/>
    <property type="match status" value="1"/>
</dbReference>
<dbReference type="PIRSF" id="PIRSF000185">
    <property type="entry name" value="Glu_DH"/>
    <property type="match status" value="1"/>
</dbReference>
<dbReference type="PRINTS" id="PR00082">
    <property type="entry name" value="GLFDHDRGNASE"/>
</dbReference>
<dbReference type="SMART" id="SM00839">
    <property type="entry name" value="ELFV_dehydrog"/>
    <property type="match status" value="1"/>
</dbReference>
<dbReference type="SUPFAM" id="SSF53223">
    <property type="entry name" value="Aminoacid dehydrogenase-like, N-terminal domain"/>
    <property type="match status" value="1"/>
</dbReference>
<dbReference type="SUPFAM" id="SSF51735">
    <property type="entry name" value="NAD(P)-binding Rossmann-fold domains"/>
    <property type="match status" value="1"/>
</dbReference>
<dbReference type="PROSITE" id="PS00074">
    <property type="entry name" value="GLFV_DEHYDROGENASE"/>
    <property type="match status" value="1"/>
</dbReference>
<organism>
    <name type="scientific">Salmonella typhimurium (strain LT2 / SGSC1412 / ATCC 700720)</name>
    <dbReference type="NCBI Taxonomy" id="99287"/>
    <lineage>
        <taxon>Bacteria</taxon>
        <taxon>Pseudomonadati</taxon>
        <taxon>Pseudomonadota</taxon>
        <taxon>Gammaproteobacteria</taxon>
        <taxon>Enterobacterales</taxon>
        <taxon>Enterobacteriaceae</taxon>
        <taxon>Salmonella</taxon>
    </lineage>
</organism>